<organism>
    <name type="scientific">Escherichia coli (strain K12 / MC4100 / BW2952)</name>
    <dbReference type="NCBI Taxonomy" id="595496"/>
    <lineage>
        <taxon>Bacteria</taxon>
        <taxon>Pseudomonadati</taxon>
        <taxon>Pseudomonadota</taxon>
        <taxon>Gammaproteobacteria</taxon>
        <taxon>Enterobacterales</taxon>
        <taxon>Enterobacteriaceae</taxon>
        <taxon>Escherichia</taxon>
    </lineage>
</organism>
<protein>
    <recommendedName>
        <fullName evidence="1">L-ribulose-5-phosphate 4-epimerase UlaF</fullName>
        <ecNumber evidence="1">5.1.3.4</ecNumber>
    </recommendedName>
    <alternativeName>
        <fullName evidence="1">L-ascorbate utilization protein F</fullName>
    </alternativeName>
    <alternativeName>
        <fullName evidence="1">Phosphoribulose isomerase</fullName>
    </alternativeName>
</protein>
<evidence type="ECO:0000255" key="1">
    <source>
        <dbReference type="HAMAP-Rule" id="MF_01952"/>
    </source>
</evidence>
<comment type="function">
    <text evidence="1">Catalyzes the isomerization of L-ribulose 5-phosphate to D-xylulose 5-phosphate. Is involved in the anaerobic L-ascorbate utilization.</text>
</comment>
<comment type="catalytic activity">
    <reaction evidence="1">
        <text>L-ribulose 5-phosphate = D-xylulose 5-phosphate</text>
        <dbReference type="Rhea" id="RHEA:22368"/>
        <dbReference type="ChEBI" id="CHEBI:57737"/>
        <dbReference type="ChEBI" id="CHEBI:58226"/>
        <dbReference type="EC" id="5.1.3.4"/>
    </reaction>
</comment>
<comment type="cofactor">
    <cofactor evidence="1">
        <name>Zn(2+)</name>
        <dbReference type="ChEBI" id="CHEBI:29105"/>
    </cofactor>
    <text evidence="1">Binds 1 zinc ion per subunit.</text>
</comment>
<comment type="pathway">
    <text evidence="1">Cofactor degradation; L-ascorbate degradation; D-xylulose 5-phosphate from L-ascorbate: step 4/4.</text>
</comment>
<comment type="induction">
    <text evidence="1">Induced by L-ascorbate. Repressed by UlaR.</text>
</comment>
<comment type="similarity">
    <text evidence="1">Belongs to the aldolase class II family. AraD/FucA subfamily.</text>
</comment>
<name>ULAF_ECOBW</name>
<keyword id="KW-0119">Carbohydrate metabolism</keyword>
<keyword id="KW-0413">Isomerase</keyword>
<keyword id="KW-0479">Metal-binding</keyword>
<keyword id="KW-0862">Zinc</keyword>
<proteinExistence type="inferred from homology"/>
<dbReference type="EC" id="5.1.3.4" evidence="1"/>
<dbReference type="EMBL" id="CP001396">
    <property type="protein sequence ID" value="ACR63677.1"/>
    <property type="molecule type" value="Genomic_DNA"/>
</dbReference>
<dbReference type="RefSeq" id="WP_001170847.1">
    <property type="nucleotide sequence ID" value="NC_012759.1"/>
</dbReference>
<dbReference type="SMR" id="C4ZR75"/>
<dbReference type="KEGG" id="ebw:BWG_3910"/>
<dbReference type="HOGENOM" id="CLU_006033_5_0_6"/>
<dbReference type="UniPathway" id="UPA00263">
    <property type="reaction ID" value="UER00380"/>
</dbReference>
<dbReference type="GO" id="GO:0005829">
    <property type="term" value="C:cytosol"/>
    <property type="evidence" value="ECO:0007669"/>
    <property type="project" value="TreeGrafter"/>
</dbReference>
<dbReference type="GO" id="GO:0016832">
    <property type="term" value="F:aldehyde-lyase activity"/>
    <property type="evidence" value="ECO:0007669"/>
    <property type="project" value="TreeGrafter"/>
</dbReference>
<dbReference type="GO" id="GO:0008742">
    <property type="term" value="F:L-ribulose-phosphate 4-epimerase activity"/>
    <property type="evidence" value="ECO:0007669"/>
    <property type="project" value="UniProtKB-UniRule"/>
</dbReference>
<dbReference type="GO" id="GO:0008270">
    <property type="term" value="F:zinc ion binding"/>
    <property type="evidence" value="ECO:0007669"/>
    <property type="project" value="UniProtKB-UniRule"/>
</dbReference>
<dbReference type="GO" id="GO:0019854">
    <property type="term" value="P:L-ascorbic acid catabolic process"/>
    <property type="evidence" value="ECO:0007669"/>
    <property type="project" value="UniProtKB-UniRule"/>
</dbReference>
<dbReference type="GO" id="GO:0019323">
    <property type="term" value="P:pentose catabolic process"/>
    <property type="evidence" value="ECO:0007669"/>
    <property type="project" value="TreeGrafter"/>
</dbReference>
<dbReference type="CDD" id="cd00398">
    <property type="entry name" value="Aldolase_II"/>
    <property type="match status" value="1"/>
</dbReference>
<dbReference type="FunFam" id="3.40.225.10:FF:000001">
    <property type="entry name" value="L-ribulose-5-phosphate 4-epimerase UlaF"/>
    <property type="match status" value="1"/>
</dbReference>
<dbReference type="Gene3D" id="3.40.225.10">
    <property type="entry name" value="Class II aldolase/adducin N-terminal domain"/>
    <property type="match status" value="1"/>
</dbReference>
<dbReference type="HAMAP" id="MF_01952">
    <property type="entry name" value="UlaF"/>
    <property type="match status" value="1"/>
</dbReference>
<dbReference type="InterPro" id="IPR050197">
    <property type="entry name" value="Aldolase_class_II_sugar_metab"/>
</dbReference>
<dbReference type="InterPro" id="IPR001303">
    <property type="entry name" value="Aldolase_II/adducin_N"/>
</dbReference>
<dbReference type="InterPro" id="IPR036409">
    <property type="entry name" value="Aldolase_II/adducin_N_sf"/>
</dbReference>
<dbReference type="InterPro" id="IPR023499">
    <property type="entry name" value="UlaF"/>
</dbReference>
<dbReference type="NCBIfam" id="NF006047">
    <property type="entry name" value="PRK08193.1"/>
    <property type="match status" value="1"/>
</dbReference>
<dbReference type="NCBIfam" id="NF009003">
    <property type="entry name" value="PRK12348.1"/>
    <property type="match status" value="1"/>
</dbReference>
<dbReference type="PANTHER" id="PTHR22789">
    <property type="entry name" value="FUCULOSE PHOSPHATE ALDOLASE"/>
    <property type="match status" value="1"/>
</dbReference>
<dbReference type="PANTHER" id="PTHR22789:SF9">
    <property type="entry name" value="L-RIBULOSE-5-PHOSPHATE 4-EPIMERASE ULAF"/>
    <property type="match status" value="1"/>
</dbReference>
<dbReference type="Pfam" id="PF00596">
    <property type="entry name" value="Aldolase_II"/>
    <property type="match status" value="1"/>
</dbReference>
<dbReference type="SMART" id="SM01007">
    <property type="entry name" value="Aldolase_II"/>
    <property type="match status" value="1"/>
</dbReference>
<dbReference type="SUPFAM" id="SSF53639">
    <property type="entry name" value="AraD/HMP-PK domain-like"/>
    <property type="match status" value="1"/>
</dbReference>
<sequence length="228" mass="25278">MQKLKQQVFEANMELPRYGLVTFTWGNVSAIDRERGLVVIKPSGVAYETMKAADMVVVDMSGKVVEGEYRPSSDTATHLELYRRYPSLGGIVHTHSTHATAWAQAGLAIPALGTTHADYFFGDIPCTRGLSEEEVQGEYELNTGKVIIETLGNAEPLHTPGIVVYQHGPFAWGKDAHDAVHNAVVMEEVAKMAWIARGINPQLNHIDSFLMNKHFMRKHGPNAYYGQK</sequence>
<gene>
    <name evidence="1" type="primary">ulaF</name>
    <name type="ordered locus">BWG_3910</name>
</gene>
<reference key="1">
    <citation type="journal article" date="2009" name="J. Bacteriol.">
        <title>Genomic sequencing reveals regulatory mutations and recombinational events in the widely used MC4100 lineage of Escherichia coli K-12.</title>
        <authorList>
            <person name="Ferenci T."/>
            <person name="Zhou Z."/>
            <person name="Betteridge T."/>
            <person name="Ren Y."/>
            <person name="Liu Y."/>
            <person name="Feng L."/>
            <person name="Reeves P.R."/>
            <person name="Wang L."/>
        </authorList>
    </citation>
    <scope>NUCLEOTIDE SEQUENCE [LARGE SCALE GENOMIC DNA]</scope>
    <source>
        <strain>K12 / MC4100 / BW2952</strain>
    </source>
</reference>
<feature type="chain" id="PRO_1000216195" description="L-ribulose-5-phosphate 4-epimerase UlaF">
    <location>
        <begin position="1"/>
        <end position="228"/>
    </location>
</feature>
<feature type="active site" description="Proton donor/acceptor" evidence="1">
    <location>
        <position position="118"/>
    </location>
</feature>
<feature type="active site" description="Proton donor/acceptor" evidence="1">
    <location>
        <position position="225"/>
    </location>
</feature>
<feature type="binding site" evidence="1">
    <location>
        <begin position="26"/>
        <end position="27"/>
    </location>
    <ligand>
        <name>substrate</name>
    </ligand>
</feature>
<feature type="binding site" evidence="1">
    <location>
        <begin position="43"/>
        <end position="44"/>
    </location>
    <ligand>
        <name>substrate</name>
    </ligand>
</feature>
<feature type="binding site" evidence="1">
    <location>
        <begin position="72"/>
        <end position="73"/>
    </location>
    <ligand>
        <name>substrate</name>
    </ligand>
</feature>
<feature type="binding site" evidence="1">
    <location>
        <position position="74"/>
    </location>
    <ligand>
        <name>Zn(2+)</name>
        <dbReference type="ChEBI" id="CHEBI:29105"/>
    </ligand>
</feature>
<feature type="binding site" evidence="1">
    <location>
        <position position="93"/>
    </location>
    <ligand>
        <name>Zn(2+)</name>
        <dbReference type="ChEBI" id="CHEBI:29105"/>
    </ligand>
</feature>
<feature type="binding site" evidence="1">
    <location>
        <position position="95"/>
    </location>
    <ligand>
        <name>Zn(2+)</name>
        <dbReference type="ChEBI" id="CHEBI:29105"/>
    </ligand>
</feature>
<feature type="binding site" evidence="1">
    <location>
        <position position="167"/>
    </location>
    <ligand>
        <name>Zn(2+)</name>
        <dbReference type="ChEBI" id="CHEBI:29105"/>
    </ligand>
</feature>
<accession>C4ZR75</accession>